<evidence type="ECO:0000255" key="1">
    <source>
        <dbReference type="HAMAP-Rule" id="MF_00505"/>
    </source>
</evidence>
<protein>
    <recommendedName>
        <fullName evidence="1">Chaperone protein HtpG</fullName>
    </recommendedName>
    <alternativeName>
        <fullName evidence="1">Heat shock protein HtpG</fullName>
    </alternativeName>
    <alternativeName>
        <fullName evidence="1">High temperature protein G</fullName>
    </alternativeName>
</protein>
<proteinExistence type="inferred from homology"/>
<sequence>MTQQTMSFQAEVKQLLHLMIHSLYSNKEIFLRELVSNASDAADKLRFEALENNALYESDPNLRIRLSFDKAARTITIDDNGIGMSRDEAIANLGTIARSGTKEFFSKLSGDQQKDAALIGQFGVGFYSGFIVADRITVETRRAGLPASEGVRWESAGEGDFQVDTIERAARGTTITLHLREGEDELLSSYRLKSIVQKYSDHVALPILMKKEEWDQEKGEMVEKDEDETINQASALWTRAKSEVTDEQYKQFYQHVAHDHQDPLAWTHNRVEGRSEYTQLLFVPSHAPFDLWNRDYRGGLKLYVKRVFIMDDAEQLLPQYLRFIKGVVDSSDLPLNVSREILQESRDVKAIREGVTKRALSMLEELANAEDDAGKEKYKTFWSAFGQVLKEGIGEDHANRERVAKLLRFASTHGDTDAQDVALADYVARMKPEQTKIYYVTADTWQAAKNSPHLEVFRKKGVEVLLLTDRVDEWMLSFLHEFDGKPLASVARGDLDLGALNDDEKKAQEETGEAMKPVVDKMKETLGEKVKDVRVTFRLTDSPSCLVADDNDMSGYLQRMLKAAGQSAPSFQPILEINPEHPLVKALKADGADFGDWCHLLFDQALLAEGGALEDPASFVKRTNALLLSRAA</sequence>
<accession>A3N786</accession>
<name>HTPG_BURP6</name>
<reference key="1">
    <citation type="journal article" date="2010" name="Genome Biol. Evol.">
        <title>Continuing evolution of Burkholderia mallei through genome reduction and large-scale rearrangements.</title>
        <authorList>
            <person name="Losada L."/>
            <person name="Ronning C.M."/>
            <person name="DeShazer D."/>
            <person name="Woods D."/>
            <person name="Fedorova N."/>
            <person name="Kim H.S."/>
            <person name="Shabalina S.A."/>
            <person name="Pearson T.R."/>
            <person name="Brinkac L."/>
            <person name="Tan P."/>
            <person name="Nandi T."/>
            <person name="Crabtree J."/>
            <person name="Badger J."/>
            <person name="Beckstrom-Sternberg S."/>
            <person name="Saqib M."/>
            <person name="Schutzer S.E."/>
            <person name="Keim P."/>
            <person name="Nierman W.C."/>
        </authorList>
    </citation>
    <scope>NUCLEOTIDE SEQUENCE [LARGE SCALE GENOMIC DNA]</scope>
    <source>
        <strain>668</strain>
    </source>
</reference>
<comment type="function">
    <text evidence="1">Molecular chaperone. Has ATPase activity.</text>
</comment>
<comment type="subunit">
    <text evidence="1">Homodimer.</text>
</comment>
<comment type="subcellular location">
    <subcellularLocation>
        <location evidence="1">Cytoplasm</location>
    </subcellularLocation>
</comment>
<comment type="similarity">
    <text evidence="1">Belongs to the heat shock protein 90 family.</text>
</comment>
<dbReference type="EMBL" id="CP000570">
    <property type="protein sequence ID" value="ABN82482.1"/>
    <property type="molecule type" value="Genomic_DNA"/>
</dbReference>
<dbReference type="RefSeq" id="WP_011851280.1">
    <property type="nucleotide sequence ID" value="NC_009074.1"/>
</dbReference>
<dbReference type="SMR" id="A3N786"/>
<dbReference type="KEGG" id="bpd:BURPS668_1158"/>
<dbReference type="HOGENOM" id="CLU_006684_3_0_4"/>
<dbReference type="GO" id="GO:0005737">
    <property type="term" value="C:cytoplasm"/>
    <property type="evidence" value="ECO:0007669"/>
    <property type="project" value="UniProtKB-SubCell"/>
</dbReference>
<dbReference type="GO" id="GO:0005524">
    <property type="term" value="F:ATP binding"/>
    <property type="evidence" value="ECO:0007669"/>
    <property type="project" value="UniProtKB-UniRule"/>
</dbReference>
<dbReference type="GO" id="GO:0016887">
    <property type="term" value="F:ATP hydrolysis activity"/>
    <property type="evidence" value="ECO:0007669"/>
    <property type="project" value="InterPro"/>
</dbReference>
<dbReference type="GO" id="GO:0140662">
    <property type="term" value="F:ATP-dependent protein folding chaperone"/>
    <property type="evidence" value="ECO:0007669"/>
    <property type="project" value="InterPro"/>
</dbReference>
<dbReference type="GO" id="GO:0051082">
    <property type="term" value="F:unfolded protein binding"/>
    <property type="evidence" value="ECO:0007669"/>
    <property type="project" value="UniProtKB-UniRule"/>
</dbReference>
<dbReference type="CDD" id="cd16927">
    <property type="entry name" value="HATPase_Hsp90-like"/>
    <property type="match status" value="1"/>
</dbReference>
<dbReference type="FunFam" id="3.30.230.80:FF:000002">
    <property type="entry name" value="Molecular chaperone HtpG"/>
    <property type="match status" value="1"/>
</dbReference>
<dbReference type="FunFam" id="3.30.565.10:FF:000009">
    <property type="entry name" value="Molecular chaperone HtpG"/>
    <property type="match status" value="1"/>
</dbReference>
<dbReference type="Gene3D" id="3.30.230.80">
    <property type="match status" value="1"/>
</dbReference>
<dbReference type="Gene3D" id="3.40.50.11260">
    <property type="match status" value="1"/>
</dbReference>
<dbReference type="Gene3D" id="1.20.120.790">
    <property type="entry name" value="Heat shock protein 90, C-terminal domain"/>
    <property type="match status" value="1"/>
</dbReference>
<dbReference type="Gene3D" id="3.30.565.10">
    <property type="entry name" value="Histidine kinase-like ATPase, C-terminal domain"/>
    <property type="match status" value="1"/>
</dbReference>
<dbReference type="HAMAP" id="MF_00505">
    <property type="entry name" value="HSP90"/>
    <property type="match status" value="1"/>
</dbReference>
<dbReference type="InterPro" id="IPR036890">
    <property type="entry name" value="HATPase_C_sf"/>
</dbReference>
<dbReference type="InterPro" id="IPR019805">
    <property type="entry name" value="Heat_shock_protein_90_CS"/>
</dbReference>
<dbReference type="InterPro" id="IPR037196">
    <property type="entry name" value="HSP90_C"/>
</dbReference>
<dbReference type="InterPro" id="IPR001404">
    <property type="entry name" value="Hsp90_fam"/>
</dbReference>
<dbReference type="InterPro" id="IPR020575">
    <property type="entry name" value="Hsp90_N"/>
</dbReference>
<dbReference type="InterPro" id="IPR020568">
    <property type="entry name" value="Ribosomal_Su5_D2-typ_SF"/>
</dbReference>
<dbReference type="NCBIfam" id="NF003555">
    <property type="entry name" value="PRK05218.1"/>
    <property type="match status" value="1"/>
</dbReference>
<dbReference type="PANTHER" id="PTHR11528">
    <property type="entry name" value="HEAT SHOCK PROTEIN 90 FAMILY MEMBER"/>
    <property type="match status" value="1"/>
</dbReference>
<dbReference type="Pfam" id="PF13589">
    <property type="entry name" value="HATPase_c_3"/>
    <property type="match status" value="1"/>
</dbReference>
<dbReference type="Pfam" id="PF00183">
    <property type="entry name" value="HSP90"/>
    <property type="match status" value="1"/>
</dbReference>
<dbReference type="PIRSF" id="PIRSF002583">
    <property type="entry name" value="Hsp90"/>
    <property type="match status" value="1"/>
</dbReference>
<dbReference type="PRINTS" id="PR00775">
    <property type="entry name" value="HEATSHOCK90"/>
</dbReference>
<dbReference type="SMART" id="SM00387">
    <property type="entry name" value="HATPase_c"/>
    <property type="match status" value="1"/>
</dbReference>
<dbReference type="SUPFAM" id="SSF55874">
    <property type="entry name" value="ATPase domain of HSP90 chaperone/DNA topoisomerase II/histidine kinase"/>
    <property type="match status" value="1"/>
</dbReference>
<dbReference type="SUPFAM" id="SSF110942">
    <property type="entry name" value="HSP90 C-terminal domain"/>
    <property type="match status" value="1"/>
</dbReference>
<dbReference type="SUPFAM" id="SSF54211">
    <property type="entry name" value="Ribosomal protein S5 domain 2-like"/>
    <property type="match status" value="1"/>
</dbReference>
<dbReference type="PROSITE" id="PS00298">
    <property type="entry name" value="HSP90"/>
    <property type="match status" value="1"/>
</dbReference>
<organism>
    <name type="scientific">Burkholderia pseudomallei (strain 668)</name>
    <dbReference type="NCBI Taxonomy" id="320373"/>
    <lineage>
        <taxon>Bacteria</taxon>
        <taxon>Pseudomonadati</taxon>
        <taxon>Pseudomonadota</taxon>
        <taxon>Betaproteobacteria</taxon>
        <taxon>Burkholderiales</taxon>
        <taxon>Burkholderiaceae</taxon>
        <taxon>Burkholderia</taxon>
        <taxon>pseudomallei group</taxon>
    </lineage>
</organism>
<keyword id="KW-0067">ATP-binding</keyword>
<keyword id="KW-0143">Chaperone</keyword>
<keyword id="KW-0963">Cytoplasm</keyword>
<keyword id="KW-0547">Nucleotide-binding</keyword>
<keyword id="KW-0346">Stress response</keyword>
<feature type="chain" id="PRO_1000014905" description="Chaperone protein HtpG">
    <location>
        <begin position="1"/>
        <end position="632"/>
    </location>
</feature>
<feature type="region of interest" description="A; substrate-binding" evidence="1">
    <location>
        <begin position="1"/>
        <end position="339"/>
    </location>
</feature>
<feature type="region of interest" description="B" evidence="1">
    <location>
        <begin position="340"/>
        <end position="559"/>
    </location>
</feature>
<feature type="region of interest" description="C" evidence="1">
    <location>
        <begin position="560"/>
        <end position="632"/>
    </location>
</feature>
<gene>
    <name evidence="1" type="primary">htpG</name>
    <name type="ordered locus">BURPS668_1158</name>
</gene>